<reference key="1">
    <citation type="journal article" date="1991" name="Proc. Natl. Acad. Sci. U.S.A.">
        <title>Functional expression cloning and characterization of the hepatocyte Na+/bile acid cotransport system.</title>
        <authorList>
            <person name="Hagenbuch B."/>
            <person name="Stieger B."/>
            <person name="Foguet M."/>
            <person name="Luebbert H."/>
            <person name="Meier P.J."/>
        </authorList>
    </citation>
    <scope>NUCLEOTIDE SEQUENCE [MRNA]</scope>
    <scope>FUNCTION</scope>
    <scope>TRANSPORT ACTIVITY</scope>
    <scope>BIOPHYSICOCHEMICAL PROPERTIES</scope>
    <scope>TISSUE SPECIFICITY</scope>
    <source>
        <tissue>Liver</tissue>
    </source>
</reference>
<reference key="2">
    <citation type="journal article" date="2004" name="Genome Res.">
        <title>The status, quality, and expansion of the NIH full-length cDNA project: the Mammalian Gene Collection (MGC).</title>
        <authorList>
            <consortium name="The MGC Project Team"/>
        </authorList>
    </citation>
    <scope>NUCLEOTIDE SEQUENCE [LARGE SCALE MRNA]</scope>
    <source>
        <tissue>Liver</tissue>
    </source>
</reference>
<reference key="3">
    <citation type="journal article" date="1998" name="Am. J. Physiol.">
        <title>Substrate specificity of the rat liver Na(+)-bile salt cotransporter in Xenopus laevis oocytes and in CHO cells.</title>
        <authorList>
            <person name="Schroeder A."/>
            <person name="Eckhardt U."/>
            <person name="Stieger B."/>
            <person name="Tynes R."/>
            <person name="Schteingart C.D."/>
            <person name="Hofmann A.F."/>
            <person name="Meier P.J."/>
            <person name="Hagenbuch B."/>
        </authorList>
    </citation>
    <scope>FUNCTION</scope>
    <scope>TRANSPORT ACTIVITY</scope>
    <scope>BIOPHYSICOCHEMICAL PROPERTIES</scope>
</reference>
<reference key="4">
    <citation type="journal article" date="2012" name="Nat. Commun.">
        <title>Quantitative maps of protein phosphorylation sites across 14 different rat organs and tissues.</title>
        <authorList>
            <person name="Lundby A."/>
            <person name="Secher A."/>
            <person name="Lage K."/>
            <person name="Nordsborg N.B."/>
            <person name="Dmytriyev A."/>
            <person name="Lundby C."/>
            <person name="Olsen J.V."/>
        </authorList>
    </citation>
    <scope>PHOSPHORYLATION [LARGE SCALE ANALYSIS] AT THR-330</scope>
    <scope>IDENTIFICATION BY MASS SPECTROMETRY [LARGE SCALE ANALYSIS]</scope>
</reference>
<organism>
    <name type="scientific">Rattus norvegicus</name>
    <name type="common">Rat</name>
    <dbReference type="NCBI Taxonomy" id="10116"/>
    <lineage>
        <taxon>Eukaryota</taxon>
        <taxon>Metazoa</taxon>
        <taxon>Chordata</taxon>
        <taxon>Craniata</taxon>
        <taxon>Vertebrata</taxon>
        <taxon>Euteleostomi</taxon>
        <taxon>Mammalia</taxon>
        <taxon>Eutheria</taxon>
        <taxon>Euarchontoglires</taxon>
        <taxon>Glires</taxon>
        <taxon>Rodentia</taxon>
        <taxon>Myomorpha</taxon>
        <taxon>Muroidea</taxon>
        <taxon>Muridae</taxon>
        <taxon>Murinae</taxon>
        <taxon>Rattus</taxon>
    </lineage>
</organism>
<gene>
    <name type="primary">Slc10a1</name>
    <name type="synonym">Ntcp</name>
</gene>
<feature type="chain" id="PRO_0000052337" description="Hepatic sodium/bile acid cotransporter">
    <location>
        <begin position="1"/>
        <end position="362"/>
    </location>
</feature>
<feature type="topological domain" description="Extracellular" evidence="2">
    <location>
        <begin position="1"/>
        <end position="22"/>
    </location>
</feature>
<feature type="transmembrane region" description="Helical; Name=1" evidence="2">
    <location>
        <begin position="23"/>
        <end position="44"/>
    </location>
</feature>
<feature type="topological domain" description="Cytoplasmic" evidence="2">
    <location>
        <begin position="45"/>
        <end position="47"/>
    </location>
</feature>
<feature type="transmembrane region" description="Helical; Name=2" evidence="2">
    <location>
        <begin position="48"/>
        <end position="83"/>
    </location>
</feature>
<feature type="topological domain" description="Extracellular" evidence="2">
    <location>
        <begin position="84"/>
        <end position="86"/>
    </location>
</feature>
<feature type="transmembrane region" description="Discontinuously helical; Name=3" evidence="2">
    <location>
        <begin position="87"/>
        <end position="112"/>
    </location>
</feature>
<feature type="topological domain" description="Cytoplasmic" evidence="2">
    <location>
        <begin position="113"/>
        <end position="115"/>
    </location>
</feature>
<feature type="transmembrane region" description="Helical; Name=4" evidence="2">
    <location>
        <begin position="116"/>
        <end position="142"/>
    </location>
</feature>
<feature type="topological domain" description="Extracellular" evidence="2">
    <location>
        <begin position="143"/>
        <end position="156"/>
    </location>
</feature>
<feature type="transmembrane region" description="Helical; Name=5" evidence="2">
    <location>
        <begin position="157"/>
        <end position="179"/>
    </location>
</feature>
<feature type="topological domain" description="Cytoplasmic" evidence="2">
    <location>
        <begin position="180"/>
        <end position="183"/>
    </location>
</feature>
<feature type="transmembrane region" description="Helical; Name=6" evidence="2">
    <location>
        <begin position="184"/>
        <end position="217"/>
    </location>
</feature>
<feature type="topological domain" description="Extracellular" evidence="2">
    <location>
        <begin position="218"/>
        <end position="219"/>
    </location>
</feature>
<feature type="transmembrane region" description="Helical; Name=7" evidence="2">
    <location>
        <begin position="220"/>
        <end position="243"/>
    </location>
</feature>
<feature type="topological domain" description="Cytoplasmic" evidence="2">
    <location>
        <begin position="244"/>
        <end position="247"/>
    </location>
</feature>
<feature type="transmembrane region" description="Discontinuously helical; Name=8" evidence="2">
    <location>
        <begin position="248"/>
        <end position="273"/>
    </location>
</feature>
<feature type="topological domain" description="Extracellular" evidence="2">
    <location>
        <begin position="274"/>
        <end position="280"/>
    </location>
</feature>
<feature type="transmembrane region" description="Helical; Name=9" evidence="2">
    <location>
        <begin position="281"/>
        <end position="311"/>
    </location>
</feature>
<feature type="topological domain" description="Cytoplasmic" evidence="2">
    <location>
        <begin position="312"/>
        <end position="362"/>
    </location>
</feature>
<feature type="region of interest" description="Disordered" evidence="4">
    <location>
        <begin position="333"/>
        <end position="362"/>
    </location>
</feature>
<feature type="compositionally biased region" description="Polar residues" evidence="4">
    <location>
        <begin position="353"/>
        <end position="362"/>
    </location>
</feature>
<feature type="modified residue" description="Phosphothreonine" evidence="8">
    <location>
        <position position="330"/>
    </location>
</feature>
<feature type="glycosylation site" description="N-linked (GlcNAc...) asparagine" evidence="3">
    <location>
        <position position="5"/>
    </location>
</feature>
<feature type="glycosylation site" description="N-linked (GlcNAc...) asparagine" evidence="3">
    <location>
        <position position="11"/>
    </location>
</feature>
<feature type="helix" evidence="9">
    <location>
        <begin position="24"/>
        <end position="43"/>
    </location>
</feature>
<feature type="helix" evidence="9">
    <location>
        <begin position="49"/>
        <end position="56"/>
    </location>
</feature>
<feature type="helix" evidence="9">
    <location>
        <begin position="60"/>
        <end position="70"/>
    </location>
</feature>
<feature type="helix" evidence="9">
    <location>
        <begin position="72"/>
        <end position="83"/>
    </location>
</feature>
<feature type="helix" evidence="9">
    <location>
        <begin position="87"/>
        <end position="97"/>
    </location>
</feature>
<feature type="helix" evidence="9">
    <location>
        <begin position="103"/>
        <end position="108"/>
    </location>
</feature>
<feature type="turn" evidence="9">
    <location>
        <begin position="109"/>
        <end position="113"/>
    </location>
</feature>
<feature type="helix" evidence="9">
    <location>
        <begin position="116"/>
        <end position="140"/>
    </location>
</feature>
<feature type="helix" evidence="9">
    <location>
        <begin position="151"/>
        <end position="153"/>
    </location>
</feature>
<feature type="helix" evidence="9">
    <location>
        <begin position="157"/>
        <end position="179"/>
    </location>
</feature>
<feature type="helix" evidence="9">
    <location>
        <begin position="181"/>
        <end position="183"/>
    </location>
</feature>
<feature type="helix" evidence="9">
    <location>
        <begin position="184"/>
        <end position="210"/>
    </location>
</feature>
<feature type="turn" evidence="9">
    <location>
        <begin position="214"/>
        <end position="217"/>
    </location>
</feature>
<feature type="helix" evidence="9">
    <location>
        <begin position="220"/>
        <end position="243"/>
    </location>
</feature>
<feature type="helix" evidence="9">
    <location>
        <begin position="248"/>
        <end position="259"/>
    </location>
</feature>
<feature type="helix" evidence="9">
    <location>
        <begin position="263"/>
        <end position="273"/>
    </location>
</feature>
<feature type="turn" evidence="9">
    <location>
        <begin position="276"/>
        <end position="278"/>
    </location>
</feature>
<feature type="helix" evidence="9">
    <location>
        <begin position="285"/>
        <end position="310"/>
    </location>
</feature>
<proteinExistence type="evidence at protein level"/>
<evidence type="ECO:0000250" key="1">
    <source>
        <dbReference type="UniProtKB" id="O97736"/>
    </source>
</evidence>
<evidence type="ECO:0000250" key="2">
    <source>
        <dbReference type="UniProtKB" id="Q14973"/>
    </source>
</evidence>
<evidence type="ECO:0000255" key="3"/>
<evidence type="ECO:0000256" key="4">
    <source>
        <dbReference type="SAM" id="MobiDB-lite"/>
    </source>
</evidence>
<evidence type="ECO:0000269" key="5">
    <source>
    </source>
</evidence>
<evidence type="ECO:0000269" key="6">
    <source>
    </source>
</evidence>
<evidence type="ECO:0000305" key="7"/>
<evidence type="ECO:0007744" key="8">
    <source>
    </source>
</evidence>
<evidence type="ECO:0007829" key="9">
    <source>
        <dbReference type="PDB" id="7VAF"/>
    </source>
</evidence>
<sequence length="362" mass="39295">MEVHNVSAPFNFSLPPGFGHRATDKALSIILVLMLLLIMLSLGCTMEFSKIKAHLWKPKGVIVALVAQFGIMPLAAFLLGKIFHLSNIEALAILICGCSPGGNLSNLFTLAMKGDMNLSIVMTTCSSFSALGMMPLLLYVYSKGIYDGDLKDKVPYKGIMISLVIVLIPCTIGIVLKSKRPHYVPYILKGGMIITFLLSVAVTALSVINVGNSIMFVMTPHLLATSSLMPFSGFLMGYILSALFQLNPSCRRTISMETGFQNIQLCSTILNVTFPPEVIGPLFFFPLLYMIFQLAEGLLIIIIFRCYEKIKPPKDQTKITYKAAATEDATPAALEKGTHNGNIPPLQPGPSPNGLNSGQMAN</sequence>
<accession>P26435</accession>
<accession>Q5BK99</accession>
<name>NTCP_RAT</name>
<keyword id="KW-0002">3D-structure</keyword>
<keyword id="KW-1003">Cell membrane</keyword>
<keyword id="KW-0325">Glycoprotein</keyword>
<keyword id="KW-0406">Ion transport</keyword>
<keyword id="KW-0445">Lipid transport</keyword>
<keyword id="KW-0472">Membrane</keyword>
<keyword id="KW-0597">Phosphoprotein</keyword>
<keyword id="KW-1185">Reference proteome</keyword>
<keyword id="KW-0915">Sodium</keyword>
<keyword id="KW-0739">Sodium transport</keyword>
<keyword id="KW-0769">Symport</keyword>
<keyword id="KW-0812">Transmembrane</keyword>
<keyword id="KW-1133">Transmembrane helix</keyword>
<keyword id="KW-0813">Transport</keyword>
<protein>
    <recommendedName>
        <fullName>Hepatic sodium/bile acid cotransporter</fullName>
    </recommendedName>
    <alternativeName>
        <fullName>Na(+)/bile acid cotransporter</fullName>
    </alternativeName>
    <alternativeName>
        <fullName>Na(+)/taurocholate transport protein</fullName>
    </alternativeName>
    <alternativeName>
        <fullName>Sodium/taurocholate cotransporting polypeptide</fullName>
        <shortName evidence="2">NTCP</shortName>
    </alternativeName>
    <alternativeName>
        <fullName>Solute carrier family 10 member 1</fullName>
        <shortName>SLC10A1</shortName>
    </alternativeName>
</protein>
<dbReference type="EMBL" id="M77479">
    <property type="protein sequence ID" value="AAA42112.1"/>
    <property type="molecule type" value="mRNA"/>
</dbReference>
<dbReference type="EMBL" id="BC091152">
    <property type="protein sequence ID" value="AAH91152.1"/>
    <property type="molecule type" value="mRNA"/>
</dbReference>
<dbReference type="PIR" id="A41601">
    <property type="entry name" value="A41601"/>
</dbReference>
<dbReference type="RefSeq" id="NP_058743.1">
    <property type="nucleotide sequence ID" value="NM_017047.2"/>
</dbReference>
<dbReference type="PDB" id="7VAF">
    <property type="method" value="EM"/>
    <property type="resolution" value="3.11 A"/>
    <property type="chains" value="A=1-320"/>
</dbReference>
<dbReference type="PDBsum" id="7VAF"/>
<dbReference type="EMDB" id="EMD-31839"/>
<dbReference type="SMR" id="P26435"/>
<dbReference type="FunCoup" id="P26435">
    <property type="interactions" value="75"/>
</dbReference>
<dbReference type="IntAct" id="P26435">
    <property type="interactions" value="2"/>
</dbReference>
<dbReference type="STRING" id="10116.ENSRNOP00000007825"/>
<dbReference type="BindingDB" id="P26435"/>
<dbReference type="ChEMBL" id="CHEMBL4847"/>
<dbReference type="TCDB" id="2.A.28.1.1">
    <property type="family name" value="the bile acid:na(+) symporter (bass) family"/>
</dbReference>
<dbReference type="GlyCosmos" id="P26435">
    <property type="glycosylation" value="5 sites, No reported glycans"/>
</dbReference>
<dbReference type="GlyGen" id="P26435">
    <property type="glycosylation" value="8 sites"/>
</dbReference>
<dbReference type="iPTMnet" id="P26435"/>
<dbReference type="PhosphoSitePlus" id="P26435"/>
<dbReference type="PaxDb" id="10116-ENSRNOP00000007825"/>
<dbReference type="Ensembl" id="ENSRNOT00000007825.4">
    <property type="protein sequence ID" value="ENSRNOP00000007825.2"/>
    <property type="gene ID" value="ENSRNOG00000005794.4"/>
</dbReference>
<dbReference type="GeneID" id="24777"/>
<dbReference type="KEGG" id="rno:24777"/>
<dbReference type="UCSC" id="RGD:3681">
    <property type="organism name" value="rat"/>
</dbReference>
<dbReference type="AGR" id="RGD:3681"/>
<dbReference type="CTD" id="6554"/>
<dbReference type="RGD" id="3681">
    <property type="gene designation" value="Slc10a1"/>
</dbReference>
<dbReference type="eggNOG" id="KOG2718">
    <property type="taxonomic scope" value="Eukaryota"/>
</dbReference>
<dbReference type="GeneTree" id="ENSGT00950000182808"/>
<dbReference type="HOGENOM" id="CLU_034788_7_5_1"/>
<dbReference type="InParanoid" id="P26435"/>
<dbReference type="OMA" id="CYEKIKP"/>
<dbReference type="OrthoDB" id="203097at2759"/>
<dbReference type="PhylomeDB" id="P26435"/>
<dbReference type="TreeFam" id="TF315811"/>
<dbReference type="Reactome" id="R-RNO-159418">
    <property type="pathway name" value="Recycling of bile acids and salts"/>
</dbReference>
<dbReference type="SABIO-RK" id="P26435"/>
<dbReference type="PRO" id="PR:P26435"/>
<dbReference type="Proteomes" id="UP000002494">
    <property type="component" value="Chromosome 6"/>
</dbReference>
<dbReference type="Bgee" id="ENSRNOG00000005794">
    <property type="expression patterns" value="Expressed in liver and 16 other cell types or tissues"/>
</dbReference>
<dbReference type="GO" id="GO:0016323">
    <property type="term" value="C:basolateral plasma membrane"/>
    <property type="evidence" value="ECO:0000314"/>
    <property type="project" value="UniProtKB"/>
</dbReference>
<dbReference type="GO" id="GO:0016020">
    <property type="term" value="C:membrane"/>
    <property type="evidence" value="ECO:0000266"/>
    <property type="project" value="RGD"/>
</dbReference>
<dbReference type="GO" id="GO:0005886">
    <property type="term" value="C:plasma membrane"/>
    <property type="evidence" value="ECO:0000266"/>
    <property type="project" value="RGD"/>
</dbReference>
<dbReference type="GO" id="GO:0015125">
    <property type="term" value="F:bile acid transmembrane transporter activity"/>
    <property type="evidence" value="ECO:0000314"/>
    <property type="project" value="RGD"/>
</dbReference>
<dbReference type="GO" id="GO:0008508">
    <property type="term" value="F:bile acid:sodium symporter activity"/>
    <property type="evidence" value="ECO:0000314"/>
    <property type="project" value="RGD"/>
</dbReference>
<dbReference type="GO" id="GO:0015721">
    <property type="term" value="P:bile acid and bile salt transport"/>
    <property type="evidence" value="ECO:0000314"/>
    <property type="project" value="RGD"/>
</dbReference>
<dbReference type="GO" id="GO:0071466">
    <property type="term" value="P:cellular response to xenobiotic stimulus"/>
    <property type="evidence" value="ECO:0000270"/>
    <property type="project" value="RGD"/>
</dbReference>
<dbReference type="GO" id="GO:0043627">
    <property type="term" value="P:response to estrogen"/>
    <property type="evidence" value="ECO:0000270"/>
    <property type="project" value="RGD"/>
</dbReference>
<dbReference type="GO" id="GO:0045471">
    <property type="term" value="P:response to ethanol"/>
    <property type="evidence" value="ECO:0000270"/>
    <property type="project" value="RGD"/>
</dbReference>
<dbReference type="GO" id="GO:0031667">
    <property type="term" value="P:response to nutrient levels"/>
    <property type="evidence" value="ECO:0000270"/>
    <property type="project" value="RGD"/>
</dbReference>
<dbReference type="FunFam" id="1.20.1530.20:FF:000016">
    <property type="entry name" value="Solute carrier family 10 member 1"/>
    <property type="match status" value="1"/>
</dbReference>
<dbReference type="Gene3D" id="1.20.1530.20">
    <property type="match status" value="1"/>
</dbReference>
<dbReference type="InterPro" id="IPR002657">
    <property type="entry name" value="BilAc:Na_symport/Acr3"/>
</dbReference>
<dbReference type="InterPro" id="IPR004710">
    <property type="entry name" value="Bilac:Na_transpt"/>
</dbReference>
<dbReference type="InterPro" id="IPR038770">
    <property type="entry name" value="Na+/solute_symporter_sf"/>
</dbReference>
<dbReference type="NCBIfam" id="TIGR00841">
    <property type="entry name" value="bass"/>
    <property type="match status" value="1"/>
</dbReference>
<dbReference type="PANTHER" id="PTHR10361:SF40">
    <property type="entry name" value="HEPATIC SODIUM_BILE ACID COTRANSPORTER"/>
    <property type="match status" value="1"/>
</dbReference>
<dbReference type="PANTHER" id="PTHR10361">
    <property type="entry name" value="SODIUM-BILE ACID COTRANSPORTER"/>
    <property type="match status" value="1"/>
</dbReference>
<dbReference type="Pfam" id="PF01758">
    <property type="entry name" value="SBF"/>
    <property type="match status" value="1"/>
</dbReference>
<comment type="function">
    <text evidence="2 5 6">As a major transporter of conjugated bile salts from plasma into the hepatocyte, it plays a key role in the enterohepatic circulation of bile salts necessary for the solubilization and absorption of dietary fat and fat-soluble vitamins (PubMed:1961729). It is strictly dependent on the extracellular presence of sodium (PubMed:1961729). It exhibits broad substrate specificity and transports various bile acids, such as taurocholate, cholate, as well as non-bile acid organic compounds, such as estrone sulfate (PubMed:9486191). Works collaboratively with the ileal transporter (NTCP2), the organic solute transporter (OST), and the bile salt export pump (BSEP), to ensure efficacious biological recycling of bile acids during enterohepatic circulation (By similarity).</text>
</comment>
<comment type="catalytic activity">
    <reaction evidence="6">
        <text>taurocholate(out) + 2 Na(+)(out) = taurocholate(in) + 2 Na(+)(in)</text>
        <dbReference type="Rhea" id="RHEA:71875"/>
        <dbReference type="ChEBI" id="CHEBI:29101"/>
        <dbReference type="ChEBI" id="CHEBI:36257"/>
    </reaction>
</comment>
<comment type="catalytic activity">
    <reaction evidence="6">
        <text>taurochenodeoxycholate(out) + 2 Na(+)(out) = taurochenodeoxycholate(in) + 2 Na(+)(in)</text>
        <dbReference type="Rhea" id="RHEA:71923"/>
        <dbReference type="ChEBI" id="CHEBI:9407"/>
        <dbReference type="ChEBI" id="CHEBI:29101"/>
    </reaction>
</comment>
<comment type="catalytic activity">
    <reaction evidence="6">
        <text>tauroursodeoxycholate(out) + 2 Na(+)(out) = tauroursodeoxycholate(in) + 2 Na(+)(in)</text>
        <dbReference type="Rhea" id="RHEA:71927"/>
        <dbReference type="ChEBI" id="CHEBI:29101"/>
        <dbReference type="ChEBI" id="CHEBI:132028"/>
    </reaction>
</comment>
<comment type="catalytic activity">
    <reaction evidence="6">
        <text>glycocholate(out) + 2 Na(+)(out) = glycocholate(in) + 2 Na(+)(in)</text>
        <dbReference type="Rhea" id="RHEA:71935"/>
        <dbReference type="ChEBI" id="CHEBI:29101"/>
        <dbReference type="ChEBI" id="CHEBI:29746"/>
    </reaction>
</comment>
<comment type="catalytic activity">
    <reaction evidence="6">
        <text>estrone 3-sulfate(out) + 2 Na(+)(out) = estrone 3-sulfate(in) + 2 Na(+)(in)</text>
        <dbReference type="Rhea" id="RHEA:71083"/>
        <dbReference type="ChEBI" id="CHEBI:29101"/>
        <dbReference type="ChEBI" id="CHEBI:60050"/>
    </reaction>
</comment>
<comment type="catalytic activity">
    <reaction evidence="1">
        <text>cholate(out) + 2 Na(+)(out) = cholate(in) + 2 Na(+)(in)</text>
        <dbReference type="Rhea" id="RHEA:71911"/>
        <dbReference type="ChEBI" id="CHEBI:29101"/>
        <dbReference type="ChEBI" id="CHEBI:29747"/>
    </reaction>
</comment>
<comment type="catalytic activity">
    <reaction evidence="1">
        <text>tauronorcholate(out) + 2 Na(+)(out) = tauronorcholate(in) + 2 Na(+)(in)</text>
        <dbReference type="Rhea" id="RHEA:71915"/>
        <dbReference type="ChEBI" id="CHEBI:29101"/>
        <dbReference type="ChEBI" id="CHEBI:191405"/>
    </reaction>
</comment>
<comment type="catalytic activity">
    <reaction evidence="1">
        <text>taurodeoxycholate(out) + 2 Na(+)(out) = taurodeoxycholate(in) + 2 Na(+)(in)</text>
        <dbReference type="Rhea" id="RHEA:72087"/>
        <dbReference type="ChEBI" id="CHEBI:29101"/>
        <dbReference type="ChEBI" id="CHEBI:36261"/>
    </reaction>
</comment>
<comment type="catalytic activity">
    <reaction evidence="1">
        <text>tauroallocholate(out) + 2 Na(+)(out) = tauroallocholate(in) + 2 Na(+)(in)</text>
        <dbReference type="Rhea" id="RHEA:51840"/>
        <dbReference type="ChEBI" id="CHEBI:29101"/>
        <dbReference type="ChEBI" id="CHEBI:191406"/>
    </reaction>
</comment>
<comment type="catalytic activity">
    <reaction evidence="1">
        <text>taurohyodeoxycholate(out) + 2 Na(+)(out) = taurohyodeoxycholate(in) + 2 Na(+)(in)</text>
        <dbReference type="Rhea" id="RHEA:72167"/>
        <dbReference type="ChEBI" id="CHEBI:29101"/>
        <dbReference type="ChEBI" id="CHEBI:191407"/>
    </reaction>
</comment>
<comment type="catalytic activity">
    <reaction evidence="1">
        <text>taurohyocholate(out) + 2 Na(+)(out) = taurohyocholate(in) + 2 Na(+)(in)</text>
        <dbReference type="Rhea" id="RHEA:72171"/>
        <dbReference type="ChEBI" id="CHEBI:29101"/>
        <dbReference type="ChEBI" id="CHEBI:58874"/>
    </reaction>
</comment>
<comment type="catalytic activity">
    <reaction evidence="1">
        <text>tauro-beta-muricholate(out) + 2 Na(+)(out) = tauro-beta-muricholate(in) + 2 Na(+)(in)</text>
        <dbReference type="Rhea" id="RHEA:72179"/>
        <dbReference type="ChEBI" id="CHEBI:29101"/>
        <dbReference type="ChEBI" id="CHEBI:133064"/>
    </reaction>
</comment>
<comment type="activity regulation">
    <text evidence="2">The transport of bile acids is sodium-dependent.</text>
</comment>
<comment type="biophysicochemical properties">
    <kinetics>
        <KM evidence="5">25 uM for taurocholate</KM>
    </kinetics>
</comment>
<comment type="subcellular location">
    <subcellularLocation>
        <location evidence="2">Cell membrane</location>
        <topology evidence="2">Multi-pass membrane protein</topology>
    </subcellularLocation>
</comment>
<comment type="tissue specificity">
    <text evidence="5">Highly expressed in liver and low expression in kidney.</text>
</comment>
<comment type="similarity">
    <text evidence="7">Belongs to the bile acid:sodium symporter (BASS) (TC 2.A.28) family.</text>
</comment>